<comment type="function">
    <text evidence="1">Catalyzes the prenylation of para-hydroxybenzoate (PHB) with an all-trans polyprenyl group. Mediates the second step in the final reaction sequence of ubiquinone-8 (UQ-8) biosynthesis, which is the condensation of the polyisoprenoid side chain with PHB, generating the first membrane-bound Q intermediate 3-octaprenyl-4-hydroxybenzoate.</text>
</comment>
<comment type="catalytic activity">
    <reaction evidence="1">
        <text>all-trans-octaprenyl diphosphate + 4-hydroxybenzoate = 4-hydroxy-3-(all-trans-octaprenyl)benzoate + diphosphate</text>
        <dbReference type="Rhea" id="RHEA:27782"/>
        <dbReference type="ChEBI" id="CHEBI:1617"/>
        <dbReference type="ChEBI" id="CHEBI:17879"/>
        <dbReference type="ChEBI" id="CHEBI:33019"/>
        <dbReference type="ChEBI" id="CHEBI:57711"/>
        <dbReference type="EC" id="2.5.1.39"/>
    </reaction>
</comment>
<comment type="cofactor">
    <cofactor evidence="1">
        <name>Mg(2+)</name>
        <dbReference type="ChEBI" id="CHEBI:18420"/>
    </cofactor>
</comment>
<comment type="pathway">
    <text evidence="1">Cofactor biosynthesis; ubiquinone biosynthesis.</text>
</comment>
<comment type="subcellular location">
    <subcellularLocation>
        <location evidence="1">Cell inner membrane</location>
        <topology evidence="1">Multi-pass membrane protein</topology>
    </subcellularLocation>
</comment>
<comment type="similarity">
    <text evidence="1">Belongs to the UbiA prenyltransferase family.</text>
</comment>
<name>UBIA_COLP3</name>
<sequence length="287" mass="32465">MLKRIQQKWLAIKLITRMDKPIGTYLLLWPTYWALWIASDGWPNLQLLLVFSLGVFIMRSAGCVINDYADRKIDGEVERTKNRPLVNGMMTSGEAINLFGVLIGMAFGLVLMLSWSTIYLSVVAVLLAAIYPFMKRHTQLPQLFLGAAFSWGMIMAFSEAQGEIPLVAWLLFTANLCWTIAYDTMYAMVDRDDDVKIGVKSTAILFAENDKRVIGFLQLMTLALLWTVGDILAFGWPYQLCIIAAAGLFSYQQLLIVNRERDACFQAFLHNHWVGLVVFVGIAIEYL</sequence>
<proteinExistence type="inferred from homology"/>
<gene>
    <name evidence="1" type="primary">ubiA</name>
    <name type="ordered locus">CPS_0126</name>
</gene>
<reference key="1">
    <citation type="journal article" date="2005" name="Proc. Natl. Acad. Sci. U.S.A.">
        <title>The psychrophilic lifestyle as revealed by the genome sequence of Colwellia psychrerythraea 34H through genomic and proteomic analyses.</title>
        <authorList>
            <person name="Methe B.A."/>
            <person name="Nelson K.E."/>
            <person name="Deming J.W."/>
            <person name="Momen B."/>
            <person name="Melamud E."/>
            <person name="Zhang X."/>
            <person name="Moult J."/>
            <person name="Madupu R."/>
            <person name="Nelson W.C."/>
            <person name="Dodson R.J."/>
            <person name="Brinkac L.M."/>
            <person name="Daugherty S.C."/>
            <person name="Durkin A.S."/>
            <person name="DeBoy R.T."/>
            <person name="Kolonay J.F."/>
            <person name="Sullivan S.A."/>
            <person name="Zhou L."/>
            <person name="Davidsen T.M."/>
            <person name="Wu M."/>
            <person name="Huston A.L."/>
            <person name="Lewis M."/>
            <person name="Weaver B."/>
            <person name="Weidman J.F."/>
            <person name="Khouri H."/>
            <person name="Utterback T.R."/>
            <person name="Feldblyum T.V."/>
            <person name="Fraser C.M."/>
        </authorList>
    </citation>
    <scope>NUCLEOTIDE SEQUENCE [LARGE SCALE GENOMIC DNA]</scope>
    <source>
        <strain>34H / ATCC BAA-681</strain>
    </source>
</reference>
<feature type="chain" id="PRO_0000262789" description="4-hydroxybenzoate octaprenyltransferase">
    <location>
        <begin position="1"/>
        <end position="287"/>
    </location>
</feature>
<feature type="transmembrane region" description="Helical" evidence="1">
    <location>
        <begin position="22"/>
        <end position="42"/>
    </location>
</feature>
<feature type="transmembrane region" description="Helical" evidence="1">
    <location>
        <begin position="45"/>
        <end position="65"/>
    </location>
</feature>
<feature type="transmembrane region" description="Helical" evidence="1">
    <location>
        <begin position="95"/>
        <end position="115"/>
    </location>
</feature>
<feature type="transmembrane region" description="Helical" evidence="1">
    <location>
        <begin position="116"/>
        <end position="136"/>
    </location>
</feature>
<feature type="transmembrane region" description="Helical" evidence="1">
    <location>
        <begin position="140"/>
        <end position="160"/>
    </location>
</feature>
<feature type="transmembrane region" description="Helical" evidence="1">
    <location>
        <begin position="162"/>
        <end position="182"/>
    </location>
</feature>
<feature type="transmembrane region" description="Helical" evidence="1">
    <location>
        <begin position="214"/>
        <end position="234"/>
    </location>
</feature>
<feature type="transmembrane region" description="Helical" evidence="1">
    <location>
        <begin position="237"/>
        <end position="257"/>
    </location>
</feature>
<feature type="transmembrane region" description="Helical" evidence="1">
    <location>
        <begin position="264"/>
        <end position="284"/>
    </location>
</feature>
<dbReference type="EC" id="2.5.1.39" evidence="1"/>
<dbReference type="EMBL" id="CP000083">
    <property type="protein sequence ID" value="AAZ27577.1"/>
    <property type="molecule type" value="Genomic_DNA"/>
</dbReference>
<dbReference type="RefSeq" id="WP_011041001.1">
    <property type="nucleotide sequence ID" value="NC_003910.7"/>
</dbReference>
<dbReference type="SMR" id="Q48AL9"/>
<dbReference type="STRING" id="167879.CPS_0126"/>
<dbReference type="KEGG" id="cps:CPS_0126"/>
<dbReference type="eggNOG" id="COG0382">
    <property type="taxonomic scope" value="Bacteria"/>
</dbReference>
<dbReference type="HOGENOM" id="CLU_034879_1_0_6"/>
<dbReference type="UniPathway" id="UPA00232"/>
<dbReference type="Proteomes" id="UP000000547">
    <property type="component" value="Chromosome"/>
</dbReference>
<dbReference type="GO" id="GO:0005886">
    <property type="term" value="C:plasma membrane"/>
    <property type="evidence" value="ECO:0007669"/>
    <property type="project" value="UniProtKB-SubCell"/>
</dbReference>
<dbReference type="GO" id="GO:0008412">
    <property type="term" value="F:4-hydroxybenzoate polyprenyltransferase activity"/>
    <property type="evidence" value="ECO:0007669"/>
    <property type="project" value="UniProtKB-UniRule"/>
</dbReference>
<dbReference type="GO" id="GO:0006744">
    <property type="term" value="P:ubiquinone biosynthetic process"/>
    <property type="evidence" value="ECO:0007669"/>
    <property type="project" value="UniProtKB-UniRule"/>
</dbReference>
<dbReference type="CDD" id="cd13959">
    <property type="entry name" value="PT_UbiA_COQ2"/>
    <property type="match status" value="1"/>
</dbReference>
<dbReference type="FunFam" id="1.10.357.140:FF:000002">
    <property type="entry name" value="4-hydroxybenzoate octaprenyltransferase"/>
    <property type="match status" value="1"/>
</dbReference>
<dbReference type="FunFam" id="1.20.120.1780:FF:000001">
    <property type="entry name" value="4-hydroxybenzoate octaprenyltransferase"/>
    <property type="match status" value="1"/>
</dbReference>
<dbReference type="Gene3D" id="1.10.357.140">
    <property type="entry name" value="UbiA prenyltransferase"/>
    <property type="match status" value="1"/>
</dbReference>
<dbReference type="Gene3D" id="1.20.120.1780">
    <property type="entry name" value="UbiA prenyltransferase"/>
    <property type="match status" value="1"/>
</dbReference>
<dbReference type="HAMAP" id="MF_01635">
    <property type="entry name" value="UbiA"/>
    <property type="match status" value="1"/>
</dbReference>
<dbReference type="InterPro" id="IPR006370">
    <property type="entry name" value="HB_polyprenyltransferase-like"/>
</dbReference>
<dbReference type="InterPro" id="IPR039653">
    <property type="entry name" value="Prenyltransferase"/>
</dbReference>
<dbReference type="InterPro" id="IPR000537">
    <property type="entry name" value="UbiA_prenyltransferase"/>
</dbReference>
<dbReference type="InterPro" id="IPR030470">
    <property type="entry name" value="UbiA_prenylTrfase_CS"/>
</dbReference>
<dbReference type="InterPro" id="IPR044878">
    <property type="entry name" value="UbiA_sf"/>
</dbReference>
<dbReference type="NCBIfam" id="TIGR01474">
    <property type="entry name" value="ubiA_proteo"/>
    <property type="match status" value="1"/>
</dbReference>
<dbReference type="PANTHER" id="PTHR11048:SF28">
    <property type="entry name" value="4-HYDROXYBENZOATE POLYPRENYLTRANSFERASE, MITOCHONDRIAL"/>
    <property type="match status" value="1"/>
</dbReference>
<dbReference type="PANTHER" id="PTHR11048">
    <property type="entry name" value="PRENYLTRANSFERASES"/>
    <property type="match status" value="1"/>
</dbReference>
<dbReference type="Pfam" id="PF01040">
    <property type="entry name" value="UbiA"/>
    <property type="match status" value="1"/>
</dbReference>
<dbReference type="PROSITE" id="PS00943">
    <property type="entry name" value="UBIA"/>
    <property type="match status" value="1"/>
</dbReference>
<protein>
    <recommendedName>
        <fullName evidence="1">4-hydroxybenzoate octaprenyltransferase</fullName>
        <ecNumber evidence="1">2.5.1.39</ecNumber>
    </recommendedName>
    <alternativeName>
        <fullName evidence="1">4-HB polyprenyltransferase</fullName>
    </alternativeName>
</protein>
<keyword id="KW-0997">Cell inner membrane</keyword>
<keyword id="KW-1003">Cell membrane</keyword>
<keyword id="KW-0460">Magnesium</keyword>
<keyword id="KW-0472">Membrane</keyword>
<keyword id="KW-0808">Transferase</keyword>
<keyword id="KW-0812">Transmembrane</keyword>
<keyword id="KW-1133">Transmembrane helix</keyword>
<keyword id="KW-0831">Ubiquinone biosynthesis</keyword>
<accession>Q48AL9</accession>
<organism>
    <name type="scientific">Colwellia psychrerythraea (strain 34H / ATCC BAA-681)</name>
    <name type="common">Vibrio psychroerythus</name>
    <dbReference type="NCBI Taxonomy" id="167879"/>
    <lineage>
        <taxon>Bacteria</taxon>
        <taxon>Pseudomonadati</taxon>
        <taxon>Pseudomonadota</taxon>
        <taxon>Gammaproteobacteria</taxon>
        <taxon>Alteromonadales</taxon>
        <taxon>Colwelliaceae</taxon>
        <taxon>Colwellia</taxon>
    </lineage>
</organism>
<evidence type="ECO:0000255" key="1">
    <source>
        <dbReference type="HAMAP-Rule" id="MF_01635"/>
    </source>
</evidence>